<sequence>MSMQDPIADMLTRIRNGQAANHVSVKMPSAKLKVAIAKLLKDEGYIADYAVADEAKPELEVTLKYFQGQPVVETIQRVSRPGLRIYKGKNELPKVMGGLGVAIVSTSKGLMTDRAARLAGMGGEVICYVA</sequence>
<comment type="function">
    <text evidence="1">One of the primary rRNA binding proteins, it binds directly to 16S rRNA central domain where it helps coordinate assembly of the platform of the 30S subunit.</text>
</comment>
<comment type="subunit">
    <text evidence="1">Part of the 30S ribosomal subunit. Contacts proteins S5 and S12.</text>
</comment>
<comment type="similarity">
    <text evidence="1">Belongs to the universal ribosomal protein uS8 family.</text>
</comment>
<evidence type="ECO:0000255" key="1">
    <source>
        <dbReference type="HAMAP-Rule" id="MF_01302"/>
    </source>
</evidence>
<evidence type="ECO:0000305" key="2"/>
<proteinExistence type="inferred from homology"/>
<name>RS8_SHEB5</name>
<accession>A3DA58</accession>
<keyword id="KW-1185">Reference proteome</keyword>
<keyword id="KW-0687">Ribonucleoprotein</keyword>
<keyword id="KW-0689">Ribosomal protein</keyword>
<keyword id="KW-0694">RNA-binding</keyword>
<keyword id="KW-0699">rRNA-binding</keyword>
<gene>
    <name evidence="1" type="primary">rpsH</name>
    <name type="ordered locus">Sbal_4156</name>
</gene>
<reference key="1">
    <citation type="submission" date="2007-02" db="EMBL/GenBank/DDBJ databases">
        <title>Complete sequence of chromosome of Shewanella baltica OS155.</title>
        <authorList>
            <consortium name="US DOE Joint Genome Institute"/>
            <person name="Copeland A."/>
            <person name="Lucas S."/>
            <person name="Lapidus A."/>
            <person name="Barry K."/>
            <person name="Detter J.C."/>
            <person name="Glavina del Rio T."/>
            <person name="Hammon N."/>
            <person name="Israni S."/>
            <person name="Dalin E."/>
            <person name="Tice H."/>
            <person name="Pitluck S."/>
            <person name="Sims D.R."/>
            <person name="Brettin T."/>
            <person name="Bruce D."/>
            <person name="Han C."/>
            <person name="Tapia R."/>
            <person name="Brainard J."/>
            <person name="Schmutz J."/>
            <person name="Larimer F."/>
            <person name="Land M."/>
            <person name="Hauser L."/>
            <person name="Kyrpides N."/>
            <person name="Mikhailova N."/>
            <person name="Brettar I."/>
            <person name="Klappenbach J."/>
            <person name="Konstantinidis K."/>
            <person name="Rodrigues J."/>
            <person name="Tiedje J."/>
            <person name="Richardson P."/>
        </authorList>
    </citation>
    <scope>NUCLEOTIDE SEQUENCE [LARGE SCALE GENOMIC DNA]</scope>
    <source>
        <strain>OS155 / ATCC BAA-1091</strain>
    </source>
</reference>
<dbReference type="EMBL" id="CP000563">
    <property type="protein sequence ID" value="ABN63621.1"/>
    <property type="molecule type" value="Genomic_DNA"/>
</dbReference>
<dbReference type="RefSeq" id="WP_006083586.1">
    <property type="nucleotide sequence ID" value="NC_009052.1"/>
</dbReference>
<dbReference type="SMR" id="A3DA58"/>
<dbReference type="STRING" id="325240.Sbal_4156"/>
<dbReference type="GeneID" id="11770571"/>
<dbReference type="KEGG" id="sbl:Sbal_4156"/>
<dbReference type="HOGENOM" id="CLU_098428_0_0_6"/>
<dbReference type="OrthoDB" id="9802617at2"/>
<dbReference type="Proteomes" id="UP000001557">
    <property type="component" value="Chromosome"/>
</dbReference>
<dbReference type="GO" id="GO:1990904">
    <property type="term" value="C:ribonucleoprotein complex"/>
    <property type="evidence" value="ECO:0007669"/>
    <property type="project" value="UniProtKB-KW"/>
</dbReference>
<dbReference type="GO" id="GO:0005840">
    <property type="term" value="C:ribosome"/>
    <property type="evidence" value="ECO:0007669"/>
    <property type="project" value="UniProtKB-KW"/>
</dbReference>
<dbReference type="GO" id="GO:0019843">
    <property type="term" value="F:rRNA binding"/>
    <property type="evidence" value="ECO:0007669"/>
    <property type="project" value="UniProtKB-UniRule"/>
</dbReference>
<dbReference type="GO" id="GO:0003735">
    <property type="term" value="F:structural constituent of ribosome"/>
    <property type="evidence" value="ECO:0007669"/>
    <property type="project" value="InterPro"/>
</dbReference>
<dbReference type="GO" id="GO:0006412">
    <property type="term" value="P:translation"/>
    <property type="evidence" value="ECO:0007669"/>
    <property type="project" value="UniProtKB-UniRule"/>
</dbReference>
<dbReference type="FunFam" id="3.30.1370.30:FF:000003">
    <property type="entry name" value="30S ribosomal protein S8"/>
    <property type="match status" value="1"/>
</dbReference>
<dbReference type="FunFam" id="3.30.1490.10:FF:000001">
    <property type="entry name" value="30S ribosomal protein S8"/>
    <property type="match status" value="1"/>
</dbReference>
<dbReference type="Gene3D" id="3.30.1370.30">
    <property type="match status" value="1"/>
</dbReference>
<dbReference type="Gene3D" id="3.30.1490.10">
    <property type="match status" value="1"/>
</dbReference>
<dbReference type="HAMAP" id="MF_01302_B">
    <property type="entry name" value="Ribosomal_uS8_B"/>
    <property type="match status" value="1"/>
</dbReference>
<dbReference type="InterPro" id="IPR000630">
    <property type="entry name" value="Ribosomal_uS8"/>
</dbReference>
<dbReference type="InterPro" id="IPR047863">
    <property type="entry name" value="Ribosomal_uS8_CS"/>
</dbReference>
<dbReference type="InterPro" id="IPR035987">
    <property type="entry name" value="Ribosomal_uS8_sf"/>
</dbReference>
<dbReference type="NCBIfam" id="NF001109">
    <property type="entry name" value="PRK00136.1"/>
    <property type="match status" value="1"/>
</dbReference>
<dbReference type="PANTHER" id="PTHR11758">
    <property type="entry name" value="40S RIBOSOMAL PROTEIN S15A"/>
    <property type="match status" value="1"/>
</dbReference>
<dbReference type="Pfam" id="PF00410">
    <property type="entry name" value="Ribosomal_S8"/>
    <property type="match status" value="1"/>
</dbReference>
<dbReference type="SUPFAM" id="SSF56047">
    <property type="entry name" value="Ribosomal protein S8"/>
    <property type="match status" value="1"/>
</dbReference>
<dbReference type="PROSITE" id="PS00053">
    <property type="entry name" value="RIBOSOMAL_S8"/>
    <property type="match status" value="1"/>
</dbReference>
<organism>
    <name type="scientific">Shewanella baltica (strain OS155 / ATCC BAA-1091)</name>
    <dbReference type="NCBI Taxonomy" id="325240"/>
    <lineage>
        <taxon>Bacteria</taxon>
        <taxon>Pseudomonadati</taxon>
        <taxon>Pseudomonadota</taxon>
        <taxon>Gammaproteobacteria</taxon>
        <taxon>Alteromonadales</taxon>
        <taxon>Shewanellaceae</taxon>
        <taxon>Shewanella</taxon>
    </lineage>
</organism>
<protein>
    <recommendedName>
        <fullName evidence="1">Small ribosomal subunit protein uS8</fullName>
    </recommendedName>
    <alternativeName>
        <fullName evidence="2">30S ribosomal protein S8</fullName>
    </alternativeName>
</protein>
<feature type="chain" id="PRO_1000051797" description="Small ribosomal subunit protein uS8">
    <location>
        <begin position="1"/>
        <end position="130"/>
    </location>
</feature>